<comment type="function">
    <text evidence="1">This is one of the proteins that binds to the 5S RNA in the ribosome where it forms part of the central protuberance.</text>
</comment>
<comment type="subunit">
    <text evidence="1">Part of the 50S ribosomal subunit; part of the 5S rRNA/L5/L18/L25 subcomplex. Contacts the 5S rRNA. Binds to the 5S rRNA independently of L5 and L18.</text>
</comment>
<comment type="similarity">
    <text evidence="1">Belongs to the bacterial ribosomal protein bL25 family. CTC subfamily.</text>
</comment>
<organism>
    <name type="scientific">Akkermansia muciniphila (strain ATCC BAA-835 / DSM 22959 / JCM 33894 / BCRC 81048 / CCUG 64013 / CIP 107961 / Muc)</name>
    <dbReference type="NCBI Taxonomy" id="349741"/>
    <lineage>
        <taxon>Bacteria</taxon>
        <taxon>Pseudomonadati</taxon>
        <taxon>Verrucomicrobiota</taxon>
        <taxon>Verrucomicrobiia</taxon>
        <taxon>Verrucomicrobiales</taxon>
        <taxon>Akkermansiaceae</taxon>
        <taxon>Akkermansia</taxon>
    </lineage>
</organism>
<proteinExistence type="inferred from homology"/>
<feature type="chain" id="PRO_1000142481" description="Large ribosomal subunit protein bL25">
    <location>
        <begin position="1"/>
        <end position="201"/>
    </location>
</feature>
<gene>
    <name evidence="1" type="primary">rplY</name>
    <name evidence="1" type="synonym">ctc</name>
    <name type="ordered locus">Amuc_1472</name>
</gene>
<name>RL25_AKKM8</name>
<evidence type="ECO:0000255" key="1">
    <source>
        <dbReference type="HAMAP-Rule" id="MF_01334"/>
    </source>
</evidence>
<evidence type="ECO:0000305" key="2"/>
<keyword id="KW-1185">Reference proteome</keyword>
<keyword id="KW-0687">Ribonucleoprotein</keyword>
<keyword id="KW-0689">Ribosomal protein</keyword>
<keyword id="KW-0694">RNA-binding</keyword>
<keyword id="KW-0699">rRNA-binding</keyword>
<sequence length="201" mass="21011">MATSHSLKAETRACGSGNLKQLRSQGLVPGVVYGPGFDNVNIQVDAREFARMLASAVSEHILVALDINGKIVKVLLKEVQHNPITNACLHVDFQAVTDTTVIHSIVPVILEGDSAGVALGGVLDQTIHELAIICQVKDLPEAITADISGLKLGESLRITDLKLPSGVTTELAGDVIVAIVEAPRVSGEEAAPAAEEAVAEK</sequence>
<accession>B2UL21</accession>
<protein>
    <recommendedName>
        <fullName evidence="1">Large ribosomal subunit protein bL25</fullName>
    </recommendedName>
    <alternativeName>
        <fullName evidence="2">50S ribosomal protein L25</fullName>
    </alternativeName>
    <alternativeName>
        <fullName evidence="1">General stress protein CTC</fullName>
    </alternativeName>
</protein>
<reference key="1">
    <citation type="journal article" date="2011" name="PLoS ONE">
        <title>The genome of Akkermansia muciniphila, a dedicated intestinal mucin degrader, and its use in exploring intestinal metagenomes.</title>
        <authorList>
            <person name="van Passel M.W."/>
            <person name="Kant R."/>
            <person name="Zoetendal E.G."/>
            <person name="Plugge C.M."/>
            <person name="Derrien M."/>
            <person name="Malfatti S.A."/>
            <person name="Chain P.S."/>
            <person name="Woyke T."/>
            <person name="Palva A."/>
            <person name="de Vos W.M."/>
            <person name="Smidt H."/>
        </authorList>
    </citation>
    <scope>NUCLEOTIDE SEQUENCE [LARGE SCALE GENOMIC DNA]</scope>
    <source>
        <strain>ATCC BAA-835 / DSM 22959 / JCM 33894 / BCRC 81048 / CCUG 64013 / CIP 107961 / Muc</strain>
    </source>
</reference>
<dbReference type="EMBL" id="CP001071">
    <property type="protein sequence ID" value="ACD05294.1"/>
    <property type="molecule type" value="Genomic_DNA"/>
</dbReference>
<dbReference type="RefSeq" id="WP_012420509.1">
    <property type="nucleotide sequence ID" value="NZ_CP071807.1"/>
</dbReference>
<dbReference type="SMR" id="B2UL21"/>
<dbReference type="STRING" id="349741.Amuc_1472"/>
<dbReference type="PaxDb" id="349741-Amuc_1472"/>
<dbReference type="KEGG" id="amu:Amuc_1472"/>
<dbReference type="eggNOG" id="COG1825">
    <property type="taxonomic scope" value="Bacteria"/>
</dbReference>
<dbReference type="HOGENOM" id="CLU_075939_2_1_0"/>
<dbReference type="OrthoDB" id="9790002at2"/>
<dbReference type="BioCyc" id="AMUC349741:G1GBX-1573-MONOMER"/>
<dbReference type="Proteomes" id="UP000001031">
    <property type="component" value="Chromosome"/>
</dbReference>
<dbReference type="GO" id="GO:0022625">
    <property type="term" value="C:cytosolic large ribosomal subunit"/>
    <property type="evidence" value="ECO:0007669"/>
    <property type="project" value="TreeGrafter"/>
</dbReference>
<dbReference type="GO" id="GO:0008097">
    <property type="term" value="F:5S rRNA binding"/>
    <property type="evidence" value="ECO:0007669"/>
    <property type="project" value="InterPro"/>
</dbReference>
<dbReference type="GO" id="GO:0003735">
    <property type="term" value="F:structural constituent of ribosome"/>
    <property type="evidence" value="ECO:0007669"/>
    <property type="project" value="InterPro"/>
</dbReference>
<dbReference type="GO" id="GO:0006412">
    <property type="term" value="P:translation"/>
    <property type="evidence" value="ECO:0007669"/>
    <property type="project" value="UniProtKB-UniRule"/>
</dbReference>
<dbReference type="CDD" id="cd00495">
    <property type="entry name" value="Ribosomal_L25_TL5_CTC"/>
    <property type="match status" value="1"/>
</dbReference>
<dbReference type="Gene3D" id="2.170.120.20">
    <property type="entry name" value="Ribosomal protein L25, beta domain"/>
    <property type="match status" value="1"/>
</dbReference>
<dbReference type="Gene3D" id="2.40.240.10">
    <property type="entry name" value="Ribosomal Protein L25, Chain P"/>
    <property type="match status" value="1"/>
</dbReference>
<dbReference type="HAMAP" id="MF_01334">
    <property type="entry name" value="Ribosomal_bL25_CTC"/>
    <property type="match status" value="1"/>
</dbReference>
<dbReference type="InterPro" id="IPR020056">
    <property type="entry name" value="Rbsml_bL25/Gln-tRNA_synth_N"/>
</dbReference>
<dbReference type="InterPro" id="IPR011035">
    <property type="entry name" value="Ribosomal_bL25/Gln-tRNA_synth"/>
</dbReference>
<dbReference type="InterPro" id="IPR020057">
    <property type="entry name" value="Ribosomal_bL25_b-dom"/>
</dbReference>
<dbReference type="InterPro" id="IPR037121">
    <property type="entry name" value="Ribosomal_bL25_C"/>
</dbReference>
<dbReference type="InterPro" id="IPR001021">
    <property type="entry name" value="Ribosomal_bL25_long"/>
</dbReference>
<dbReference type="InterPro" id="IPR029751">
    <property type="entry name" value="Ribosomal_L25_dom"/>
</dbReference>
<dbReference type="InterPro" id="IPR020930">
    <property type="entry name" value="Ribosomal_uL5_bac-type"/>
</dbReference>
<dbReference type="NCBIfam" id="TIGR00731">
    <property type="entry name" value="bL25_bact_ctc"/>
    <property type="match status" value="1"/>
</dbReference>
<dbReference type="PANTHER" id="PTHR33284">
    <property type="entry name" value="RIBOSOMAL PROTEIN L25/GLN-TRNA SYNTHETASE, ANTI-CODON-BINDING DOMAIN-CONTAINING PROTEIN"/>
    <property type="match status" value="1"/>
</dbReference>
<dbReference type="PANTHER" id="PTHR33284:SF1">
    <property type="entry name" value="RIBOSOMAL PROTEIN L25_GLN-TRNA SYNTHETASE, ANTI-CODON-BINDING DOMAIN-CONTAINING PROTEIN"/>
    <property type="match status" value="1"/>
</dbReference>
<dbReference type="Pfam" id="PF01386">
    <property type="entry name" value="Ribosomal_L25p"/>
    <property type="match status" value="1"/>
</dbReference>
<dbReference type="Pfam" id="PF14693">
    <property type="entry name" value="Ribosomal_TL5_C"/>
    <property type="match status" value="1"/>
</dbReference>
<dbReference type="SUPFAM" id="SSF50715">
    <property type="entry name" value="Ribosomal protein L25-like"/>
    <property type="match status" value="1"/>
</dbReference>